<name>TRPA_AERS4</name>
<gene>
    <name evidence="1" type="primary">trpA</name>
    <name type="ordered locus">ASA_1402</name>
</gene>
<sequence length="268" mass="28295">MNPYAQLFSRLDAVNQGAFVPFVMLGDPTPELSLAIVDALVAGGADALELGIPFSDPVADGPTIQGAALRAFESHTTPDDCFELLGRIRAKYPQLPIGLLVYANLVYVRHIDGFYEKCQQAGVDSVLVADVPVQMCAPYKAAADKFGIDSIFIAPPNGDAETLKQVAELGSGYTYLVSRAGVTGAETKAGMPVDGLINTLREFNAPPALLGFGISEPAQVREAIAAGAAGAISGSAVVKIIETHHQNPEHMLTRLKEFVEGMKAATNR</sequence>
<protein>
    <recommendedName>
        <fullName evidence="1">Tryptophan synthase alpha chain</fullName>
        <ecNumber evidence="1">4.2.1.20</ecNumber>
    </recommendedName>
</protein>
<organism>
    <name type="scientific">Aeromonas salmonicida (strain A449)</name>
    <dbReference type="NCBI Taxonomy" id="382245"/>
    <lineage>
        <taxon>Bacteria</taxon>
        <taxon>Pseudomonadati</taxon>
        <taxon>Pseudomonadota</taxon>
        <taxon>Gammaproteobacteria</taxon>
        <taxon>Aeromonadales</taxon>
        <taxon>Aeromonadaceae</taxon>
        <taxon>Aeromonas</taxon>
    </lineage>
</organism>
<proteinExistence type="inferred from homology"/>
<accession>A4SKT0</accession>
<keyword id="KW-0028">Amino-acid biosynthesis</keyword>
<keyword id="KW-0057">Aromatic amino acid biosynthesis</keyword>
<keyword id="KW-0456">Lyase</keyword>
<keyword id="KW-0822">Tryptophan biosynthesis</keyword>
<feature type="chain" id="PRO_1000018162" description="Tryptophan synthase alpha chain">
    <location>
        <begin position="1"/>
        <end position="268"/>
    </location>
</feature>
<feature type="active site" description="Proton acceptor" evidence="1">
    <location>
        <position position="49"/>
    </location>
</feature>
<feature type="active site" description="Proton acceptor" evidence="1">
    <location>
        <position position="60"/>
    </location>
</feature>
<comment type="function">
    <text evidence="1">The alpha subunit is responsible for the aldol cleavage of indoleglycerol phosphate to indole and glyceraldehyde 3-phosphate.</text>
</comment>
<comment type="catalytic activity">
    <reaction evidence="1">
        <text>(1S,2R)-1-C-(indol-3-yl)glycerol 3-phosphate + L-serine = D-glyceraldehyde 3-phosphate + L-tryptophan + H2O</text>
        <dbReference type="Rhea" id="RHEA:10532"/>
        <dbReference type="ChEBI" id="CHEBI:15377"/>
        <dbReference type="ChEBI" id="CHEBI:33384"/>
        <dbReference type="ChEBI" id="CHEBI:57912"/>
        <dbReference type="ChEBI" id="CHEBI:58866"/>
        <dbReference type="ChEBI" id="CHEBI:59776"/>
        <dbReference type="EC" id="4.2.1.20"/>
    </reaction>
</comment>
<comment type="pathway">
    <text evidence="1">Amino-acid biosynthesis; L-tryptophan biosynthesis; L-tryptophan from chorismate: step 5/5.</text>
</comment>
<comment type="subunit">
    <text evidence="1">Tetramer of two alpha and two beta chains.</text>
</comment>
<comment type="similarity">
    <text evidence="1">Belongs to the TrpA family.</text>
</comment>
<evidence type="ECO:0000255" key="1">
    <source>
        <dbReference type="HAMAP-Rule" id="MF_00131"/>
    </source>
</evidence>
<reference key="1">
    <citation type="journal article" date="2008" name="BMC Genomics">
        <title>The genome of Aeromonas salmonicida subsp. salmonicida A449: insights into the evolution of a fish pathogen.</title>
        <authorList>
            <person name="Reith M.E."/>
            <person name="Singh R.K."/>
            <person name="Curtis B."/>
            <person name="Boyd J.M."/>
            <person name="Bouevitch A."/>
            <person name="Kimball J."/>
            <person name="Munholland J."/>
            <person name="Murphy C."/>
            <person name="Sarty D."/>
            <person name="Williams J."/>
            <person name="Nash J.H."/>
            <person name="Johnson S.C."/>
            <person name="Brown L.L."/>
        </authorList>
    </citation>
    <scope>NUCLEOTIDE SEQUENCE [LARGE SCALE GENOMIC DNA]</scope>
    <source>
        <strain>A449</strain>
    </source>
</reference>
<dbReference type="EC" id="4.2.1.20" evidence="1"/>
<dbReference type="EMBL" id="CP000644">
    <property type="protein sequence ID" value="ABO89502.1"/>
    <property type="molecule type" value="Genomic_DNA"/>
</dbReference>
<dbReference type="RefSeq" id="WP_005319145.1">
    <property type="nucleotide sequence ID" value="NC_009348.1"/>
</dbReference>
<dbReference type="SMR" id="A4SKT0"/>
<dbReference type="STRING" id="29491.GCA_000820065_04080"/>
<dbReference type="KEGG" id="asa:ASA_1402"/>
<dbReference type="PATRIC" id="fig|382245.13.peg.1399"/>
<dbReference type="eggNOG" id="COG0159">
    <property type="taxonomic scope" value="Bacteria"/>
</dbReference>
<dbReference type="HOGENOM" id="CLU_016734_0_4_6"/>
<dbReference type="UniPathway" id="UPA00035">
    <property type="reaction ID" value="UER00044"/>
</dbReference>
<dbReference type="Proteomes" id="UP000000225">
    <property type="component" value="Chromosome"/>
</dbReference>
<dbReference type="GO" id="GO:0005829">
    <property type="term" value="C:cytosol"/>
    <property type="evidence" value="ECO:0007669"/>
    <property type="project" value="TreeGrafter"/>
</dbReference>
<dbReference type="GO" id="GO:0004834">
    <property type="term" value="F:tryptophan synthase activity"/>
    <property type="evidence" value="ECO:0007669"/>
    <property type="project" value="UniProtKB-UniRule"/>
</dbReference>
<dbReference type="CDD" id="cd04724">
    <property type="entry name" value="Tryptophan_synthase_alpha"/>
    <property type="match status" value="1"/>
</dbReference>
<dbReference type="FunFam" id="3.20.20.70:FF:000037">
    <property type="entry name" value="Tryptophan synthase alpha chain"/>
    <property type="match status" value="1"/>
</dbReference>
<dbReference type="Gene3D" id="3.20.20.70">
    <property type="entry name" value="Aldolase class I"/>
    <property type="match status" value="1"/>
</dbReference>
<dbReference type="HAMAP" id="MF_00131">
    <property type="entry name" value="Trp_synth_alpha"/>
    <property type="match status" value="1"/>
</dbReference>
<dbReference type="InterPro" id="IPR013785">
    <property type="entry name" value="Aldolase_TIM"/>
</dbReference>
<dbReference type="InterPro" id="IPR011060">
    <property type="entry name" value="RibuloseP-bd_barrel"/>
</dbReference>
<dbReference type="InterPro" id="IPR018204">
    <property type="entry name" value="Trp_synthase_alpha_AS"/>
</dbReference>
<dbReference type="InterPro" id="IPR002028">
    <property type="entry name" value="Trp_synthase_suA"/>
</dbReference>
<dbReference type="NCBIfam" id="TIGR00262">
    <property type="entry name" value="trpA"/>
    <property type="match status" value="1"/>
</dbReference>
<dbReference type="PANTHER" id="PTHR43406:SF1">
    <property type="entry name" value="TRYPTOPHAN SYNTHASE ALPHA CHAIN, CHLOROPLASTIC"/>
    <property type="match status" value="1"/>
</dbReference>
<dbReference type="PANTHER" id="PTHR43406">
    <property type="entry name" value="TRYPTOPHAN SYNTHASE, ALPHA CHAIN"/>
    <property type="match status" value="1"/>
</dbReference>
<dbReference type="Pfam" id="PF00290">
    <property type="entry name" value="Trp_syntA"/>
    <property type="match status" value="1"/>
</dbReference>
<dbReference type="SUPFAM" id="SSF51366">
    <property type="entry name" value="Ribulose-phoshate binding barrel"/>
    <property type="match status" value="1"/>
</dbReference>
<dbReference type="PROSITE" id="PS00167">
    <property type="entry name" value="TRP_SYNTHASE_ALPHA"/>
    <property type="match status" value="1"/>
</dbReference>